<name>374R_IIV6</name>
<dbReference type="EMBL" id="AF303741">
    <property type="protein sequence ID" value="AAK82234.1"/>
    <property type="molecule type" value="Genomic_DNA"/>
</dbReference>
<dbReference type="RefSeq" id="NP_149837.1">
    <property type="nucleotide sequence ID" value="NC_003038.1"/>
</dbReference>
<dbReference type="KEGG" id="vg:1732968"/>
<dbReference type="OrthoDB" id="37762at10239"/>
<dbReference type="Proteomes" id="UP000001359">
    <property type="component" value="Genome"/>
</dbReference>
<gene>
    <name type="ORF">IIV6-374R</name>
</gene>
<proteinExistence type="predicted"/>
<organism>
    <name type="scientific">Invertebrate iridescent virus 6</name>
    <name type="common">IIV-6</name>
    <name type="synonym">Chilo iridescent virus</name>
    <dbReference type="NCBI Taxonomy" id="176652"/>
    <lineage>
        <taxon>Viruses</taxon>
        <taxon>Varidnaviria</taxon>
        <taxon>Bamfordvirae</taxon>
        <taxon>Nucleocytoviricota</taxon>
        <taxon>Megaviricetes</taxon>
        <taxon>Pimascovirales</taxon>
        <taxon>Iridoviridae</taxon>
        <taxon>Betairidovirinae</taxon>
        <taxon>Iridovirus</taxon>
    </lineage>
</organism>
<organismHost>
    <name type="scientific">Acheta domesticus</name>
    <name type="common">House cricket</name>
    <dbReference type="NCBI Taxonomy" id="6997"/>
</organismHost>
<organismHost>
    <name type="scientific">Chilo suppressalis</name>
    <name type="common">Asiatic rice borer moth</name>
    <dbReference type="NCBI Taxonomy" id="168631"/>
</organismHost>
<organismHost>
    <name type="scientific">Gryllus bimaculatus</name>
    <name type="common">Two-spotted cricket</name>
    <dbReference type="NCBI Taxonomy" id="6999"/>
</organismHost>
<organismHost>
    <name type="scientific">Gryllus campestris</name>
    <dbReference type="NCBI Taxonomy" id="58607"/>
</organismHost>
<organismHost>
    <name type="scientific">Spodoptera frugiperda</name>
    <name type="common">Fall armyworm</name>
    <dbReference type="NCBI Taxonomy" id="7108"/>
</organismHost>
<feature type="chain" id="PRO_0000377873" description="Uncharacterized protein 374R">
    <location>
        <begin position="1"/>
        <end position="165"/>
    </location>
</feature>
<protein>
    <recommendedName>
        <fullName>Uncharacterized protein 374R</fullName>
    </recommendedName>
</protein>
<keyword id="KW-1185">Reference proteome</keyword>
<reference key="1">
    <citation type="journal article" date="2001" name="Virology">
        <title>Analysis of the first complete DNA sequence of an invertebrate iridovirus: coding strategy of the genome of Chilo iridescent virus.</title>
        <authorList>
            <person name="Jakob N.J."/>
            <person name="Mueller K."/>
            <person name="Bahr U."/>
            <person name="Darai G."/>
        </authorList>
    </citation>
    <scope>NUCLEOTIDE SEQUENCE [LARGE SCALE GENOMIC DNA]</scope>
</reference>
<reference key="2">
    <citation type="journal article" date="2007" name="Virol. J.">
        <title>Comparative genomic analysis of the family Iridoviridae: re-annotating and defining the core set of iridovirus genes.</title>
        <authorList>
            <person name="Eaton H.E."/>
            <person name="Metcalf J."/>
            <person name="Penny E."/>
            <person name="Tcherepanov V."/>
            <person name="Upton C."/>
            <person name="Brunetti C.R."/>
        </authorList>
    </citation>
    <scope>GENOME REANNOTATION</scope>
</reference>
<sequence>MDIEFGNEYRTYGVGLGGYIEGMERGGVANRLNQMLMNPEEKFFSTLNLAFEKINDYRPLDANTRDLMADFATKMPHLSFKNATTFVLGCLASIKHKNNVLNKNEIKKIFSLLHHFKDTENISPSDVIRYAKFAMINNFYIEDLDINEEDDEEYGDEEYGDEEYE</sequence>
<accession>Q91FF0</accession>